<organism>
    <name type="scientific">Spiroplasma kunkelii</name>
    <dbReference type="NCBI Taxonomy" id="47834"/>
    <lineage>
        <taxon>Bacteria</taxon>
        <taxon>Bacillati</taxon>
        <taxon>Mycoplasmatota</taxon>
        <taxon>Mollicutes</taxon>
        <taxon>Entomoplasmatales</taxon>
        <taxon>Spiroplasmataceae</taxon>
        <taxon>Spiroplasma</taxon>
    </lineage>
</organism>
<sequence>MALLGTYNHTLDDKGRLTIPSKMREQFKDDKVFISLGFDGCVDVRNEAEWLKWTEKVASTGQATAEGRALTRKIMSMSDETTFDNAGRIKISSILQNKANITKDVVIIGNNDHLELWDLKVWEVYIEQAPGIEEAAKNFEEKI</sequence>
<proteinExistence type="inferred from homology"/>
<protein>
    <recommendedName>
        <fullName>Transcriptional regulator MraZ</fullName>
    </recommendedName>
</protein>
<name>MRAZ_SPIKU</name>
<gene>
    <name evidence="1" type="primary">mraZ</name>
</gene>
<reference key="1">
    <citation type="journal article" date="2004" name="DNA Cell Biol.">
        <title>Cell division gene cluster in Spiroplasma kunkelii: functional characterization of ftsZ and the first report of ftsA in mollicutes.</title>
        <authorList>
            <person name="Zhao Y."/>
            <person name="Hammond R.W."/>
            <person name="Lee I.-M."/>
            <person name="Roe B.A."/>
            <person name="Lin S."/>
            <person name="Davis R.E."/>
        </authorList>
    </citation>
    <scope>NUCLEOTIDE SEQUENCE [GENOMIC DNA]</scope>
    <source>
        <strain>CR2-3x</strain>
    </source>
</reference>
<accession>Q6XZ05</accession>
<evidence type="ECO:0000255" key="1">
    <source>
        <dbReference type="HAMAP-Rule" id="MF_01008"/>
    </source>
</evidence>
<evidence type="ECO:0000255" key="2">
    <source>
        <dbReference type="PROSITE-ProRule" id="PRU01076"/>
    </source>
</evidence>
<feature type="chain" id="PRO_0000108537" description="Transcriptional regulator MraZ">
    <location>
        <begin position="1"/>
        <end position="143"/>
    </location>
</feature>
<feature type="domain" description="SpoVT-AbrB 1" evidence="2">
    <location>
        <begin position="6"/>
        <end position="49"/>
    </location>
</feature>
<feature type="domain" description="SpoVT-AbrB 2" evidence="2">
    <location>
        <begin position="78"/>
        <end position="121"/>
    </location>
</feature>
<keyword id="KW-0963">Cytoplasm</keyword>
<keyword id="KW-0238">DNA-binding</keyword>
<keyword id="KW-0677">Repeat</keyword>
<keyword id="KW-0804">Transcription</keyword>
<keyword id="KW-0805">Transcription regulation</keyword>
<dbReference type="EMBL" id="AY198132">
    <property type="protein sequence ID" value="AAP42767.1"/>
    <property type="molecule type" value="Genomic_DNA"/>
</dbReference>
<dbReference type="SMR" id="Q6XZ05"/>
<dbReference type="GO" id="GO:0005737">
    <property type="term" value="C:cytoplasm"/>
    <property type="evidence" value="ECO:0007669"/>
    <property type="project" value="UniProtKB-UniRule"/>
</dbReference>
<dbReference type="GO" id="GO:0009295">
    <property type="term" value="C:nucleoid"/>
    <property type="evidence" value="ECO:0007669"/>
    <property type="project" value="UniProtKB-SubCell"/>
</dbReference>
<dbReference type="GO" id="GO:0003700">
    <property type="term" value="F:DNA-binding transcription factor activity"/>
    <property type="evidence" value="ECO:0007669"/>
    <property type="project" value="UniProtKB-UniRule"/>
</dbReference>
<dbReference type="GO" id="GO:0000976">
    <property type="term" value="F:transcription cis-regulatory region binding"/>
    <property type="evidence" value="ECO:0007669"/>
    <property type="project" value="TreeGrafter"/>
</dbReference>
<dbReference type="GO" id="GO:2000143">
    <property type="term" value="P:negative regulation of DNA-templated transcription initiation"/>
    <property type="evidence" value="ECO:0007669"/>
    <property type="project" value="TreeGrafter"/>
</dbReference>
<dbReference type="CDD" id="cd16321">
    <property type="entry name" value="MraZ_C"/>
    <property type="match status" value="1"/>
</dbReference>
<dbReference type="CDD" id="cd16320">
    <property type="entry name" value="MraZ_N"/>
    <property type="match status" value="1"/>
</dbReference>
<dbReference type="Gene3D" id="3.40.1550.20">
    <property type="entry name" value="Transcriptional regulator MraZ domain"/>
    <property type="match status" value="1"/>
</dbReference>
<dbReference type="HAMAP" id="MF_01008">
    <property type="entry name" value="MraZ"/>
    <property type="match status" value="1"/>
</dbReference>
<dbReference type="InterPro" id="IPR003444">
    <property type="entry name" value="MraZ"/>
</dbReference>
<dbReference type="InterPro" id="IPR035644">
    <property type="entry name" value="MraZ_C"/>
</dbReference>
<dbReference type="InterPro" id="IPR020603">
    <property type="entry name" value="MraZ_dom"/>
</dbReference>
<dbReference type="InterPro" id="IPR035642">
    <property type="entry name" value="MraZ_N"/>
</dbReference>
<dbReference type="InterPro" id="IPR038619">
    <property type="entry name" value="MraZ_sf"/>
</dbReference>
<dbReference type="InterPro" id="IPR007159">
    <property type="entry name" value="SpoVT-AbrB_dom"/>
</dbReference>
<dbReference type="InterPro" id="IPR037914">
    <property type="entry name" value="SpoVT-AbrB_sf"/>
</dbReference>
<dbReference type="NCBIfam" id="TIGR00242">
    <property type="entry name" value="division/cell wall cluster transcriptional repressor MraZ"/>
    <property type="match status" value="1"/>
</dbReference>
<dbReference type="PANTHER" id="PTHR34701">
    <property type="entry name" value="TRANSCRIPTIONAL REGULATOR MRAZ"/>
    <property type="match status" value="1"/>
</dbReference>
<dbReference type="PANTHER" id="PTHR34701:SF1">
    <property type="entry name" value="TRANSCRIPTIONAL REGULATOR MRAZ"/>
    <property type="match status" value="1"/>
</dbReference>
<dbReference type="Pfam" id="PF02381">
    <property type="entry name" value="MraZ"/>
    <property type="match status" value="2"/>
</dbReference>
<dbReference type="SUPFAM" id="SSF89447">
    <property type="entry name" value="AbrB/MazE/MraZ-like"/>
    <property type="match status" value="1"/>
</dbReference>
<dbReference type="PROSITE" id="PS51740">
    <property type="entry name" value="SPOVT_ABRB"/>
    <property type="match status" value="2"/>
</dbReference>
<comment type="subunit">
    <text evidence="1">Forms oligomers.</text>
</comment>
<comment type="subcellular location">
    <subcellularLocation>
        <location evidence="1">Cytoplasm</location>
        <location evidence="1">Nucleoid</location>
    </subcellularLocation>
</comment>
<comment type="similarity">
    <text evidence="1">Belongs to the MraZ family.</text>
</comment>